<keyword id="KW-1165">Clathrin-mediated endocytosis of virus by host</keyword>
<keyword id="KW-1015">Disulfide bond</keyword>
<keyword id="KW-0325">Glycoprotein</keyword>
<keyword id="KW-1038">Host endoplasmic reticulum</keyword>
<keyword id="KW-1040">Host Golgi apparatus</keyword>
<keyword id="KW-1043">Host membrane</keyword>
<keyword id="KW-0945">Host-virus interaction</keyword>
<keyword id="KW-0472">Membrane</keyword>
<keyword id="KW-1185">Reference proteome</keyword>
<keyword id="KW-0964">Secreted</keyword>
<keyword id="KW-0732">Signal</keyword>
<keyword id="KW-1161">Viral attachment to host cell</keyword>
<keyword id="KW-0261">Viral envelope protein</keyword>
<keyword id="KW-1162">Viral penetration into host cytoplasm</keyword>
<keyword id="KW-0946">Virion</keyword>
<keyword id="KW-1164">Virus endocytosis by host</keyword>
<keyword id="KW-1160">Virus entry into host cell</keyword>
<comment type="function">
    <text evidence="3">Minor envelope protein. Part of the glycoproteins heterotrimer GP2b-GP3-GP4 which is probably responsible for the attachment to target host cell. This attachment induces virion internalization predominantly through clathrin-dependent endocytosis.</text>
</comment>
<comment type="subunit">
    <text evidence="1 5">Heterotrimer of GP2b, GP3, and GP4; disulfide-linked (Probable). The GP2b-GP3-GP4 complex associates with the E protein (By similarity).</text>
</comment>
<comment type="subcellular location">
    <subcellularLocation>
        <location evidence="5">Virion membrane</location>
        <topology evidence="5">Peripheral membrane protein</topology>
    </subcellularLocation>
    <subcellularLocation>
        <location>Host endoplasmic reticulum membrane</location>
        <topology>Peripheral membrane protein</topology>
    </subcellularLocation>
    <subcellularLocation>
        <location evidence="5">Host Golgi apparatus membrane</location>
        <topology evidence="5">Peripheral membrane protein</topology>
    </subcellularLocation>
    <subcellularLocation>
        <location evidence="1">Secreted</location>
    </subcellularLocation>
    <text evidence="4">Only a small fraction of GP3 synthesized in infected cells ends up in virions. The signal sequence functions as an uncleaved signal when glycosylated at Asn-28 and Asn-29. When the protein is not glycosylated at these sites, the signal sequence is cleaved (PubMed:24142700).</text>
</comment>
<comment type="PTM">
    <text evidence="4">N-glycosylation for overlapping sequons occurs at both Asn-28 and Asn-29, and blocks cleavage of the signal peptide between Gly-26 and Ser-27.</text>
</comment>
<comment type="similarity">
    <text evidence="5">Belongs to the arteriviridae GP3 protein family.</text>
</comment>
<proteinExistence type="evidence at protein level"/>
<gene>
    <name type="primary">GP3</name>
    <name type="ORF">3</name>
</gene>
<name>GP3_EAVBU</name>
<feature type="signal peptide" description="Not cleaved" evidence="2">
    <location>
        <begin position="1"/>
        <end position="26"/>
    </location>
</feature>
<feature type="chain" id="PRO_0000080878" description="Glycoprotein 3">
    <location>
        <begin position="27"/>
        <end position="163"/>
    </location>
</feature>
<feature type="region of interest" description="Important for peripheral membrane localization">
    <location>
        <begin position="142"/>
        <end position="158"/>
    </location>
</feature>
<feature type="glycosylation site" description="N-linked (GlcNAc...) asparagine; by host" evidence="4">
    <location>
        <position position="28"/>
    </location>
</feature>
<feature type="glycosylation site" description="N-linked (GlcNAc...) asparagine; by host" evidence="4">
    <location>
        <position position="29"/>
    </location>
</feature>
<feature type="glycosylation site" description="N-linked (GlcNAc...) asparagine; by host" evidence="2">
    <location>
        <position position="49"/>
    </location>
</feature>
<feature type="glycosylation site" description="N-linked (GlcNAc...) asparagine; by host" evidence="2">
    <location>
        <position position="96"/>
    </location>
</feature>
<feature type="glycosylation site" description="N-linked (GlcNAc...) asparagine; by host" evidence="2">
    <location>
        <position position="106"/>
    </location>
</feature>
<feature type="glycosylation site" description="N-linked (GlcNAc...) asparagine; by host" evidence="2">
    <location>
        <position position="118"/>
    </location>
</feature>
<feature type="mutagenesis site" description="Not glycosylated, no cleavage of the signal peptide. Not glycosylated, allows cleavage of the signal peptide; when associated with H-29." evidence="4">
    <original>N</original>
    <variation>H</variation>
    <location>
        <position position="28"/>
    </location>
</feature>
<feature type="mutagenesis site" description="Not glycosylated, no cleavage of the signal peptide. Not glycosylated; allows cleavage of the signal peptide; when associated with Q-29." evidence="4">
    <original>N</original>
    <variation>Q</variation>
    <location>
        <position position="28"/>
    </location>
</feature>
<feature type="mutagenesis site" description="Not glycosylated, no cleavage of the signal peptide. Not glycosylated; allows cleavage of the signal peptide; when associated with H-28." evidence="4">
    <original>N</original>
    <variation>H</variation>
    <location>
        <position position="29"/>
    </location>
</feature>
<feature type="mutagenesis site" description="Not glycosylated, no cleavage of the signal peptide. Not glycosylated; allows cleavage of the signal peptide; when associated with Q-28." evidence="4">
    <original>N</original>
    <variation>Q</variation>
    <location>
        <position position="29"/>
    </location>
</feature>
<feature type="mutagenesis site" description="Allows secretion of the protein. No effect in inhibition of signal peptide cleavage by adjacent carbohydrates." evidence="4">
    <location>
        <begin position="137"/>
        <end position="163"/>
    </location>
</feature>
<accession>P28993</accession>
<organism>
    <name type="scientific">Equine arteritis virus (strain Bucyrus)</name>
    <name type="common">EAV</name>
    <dbReference type="NCBI Taxonomy" id="299386"/>
    <lineage>
        <taxon>Viruses</taxon>
        <taxon>Riboviria</taxon>
        <taxon>Orthornavirae</taxon>
        <taxon>Pisuviricota</taxon>
        <taxon>Pisoniviricetes</taxon>
        <taxon>Nidovirales</taxon>
        <taxon>Arnidovirineae</taxon>
        <taxon>Arteriviridae</taxon>
        <taxon>Equarterivirinae</taxon>
        <taxon>Alphaarterivirus</taxon>
        <taxon>Alphaarterivirus equid</taxon>
    </lineage>
</organism>
<protein>
    <recommendedName>
        <fullName>Glycoprotein 3</fullName>
        <shortName>Protein GP3</shortName>
    </recommendedName>
</protein>
<reference key="1">
    <citation type="journal article" date="1991" name="J. Virol.">
        <title>Equine arteritis virus is not a togavirus but belongs to the coronaviruslike superfamily.</title>
        <authorList>
            <person name="den Boon J.A."/>
            <person name="Snijder E.J."/>
            <person name="Chirnside E.D."/>
            <person name="de Vries A.A.F."/>
            <person name="Horzinek M.C."/>
            <person name="Spaan W.J.M."/>
        </authorList>
    </citation>
    <scope>NUCLEOTIDE SEQUENCE [GENOMIC RNA]</scope>
</reference>
<reference key="2">
    <citation type="journal article" date="2002" name="J. Virol.">
        <title>Characterization of two new structural glycoproteins, GP(3) and GP(4), of equine arteritis virus.</title>
        <authorList>
            <person name="Wieringa R."/>
            <person name="de Vries A.A."/>
            <person name="Raamsman M.J."/>
            <person name="Rottier P.J."/>
        </authorList>
    </citation>
    <scope>CHARACTERIZATION</scope>
    <scope>SUBCELLULAR LOCATION</scope>
</reference>
<reference key="3">
    <citation type="journal article" date="2003" name="J. Virol.">
        <title>Formation of disulfide-linked complexes between the three minor envelope glycoproteins (GP2b, GP3, and GP4) of equine arteritis virus.</title>
        <authorList>
            <person name="Wieringa R."/>
            <person name="de Vries A.A."/>
            <person name="Rottier P.J."/>
        </authorList>
    </citation>
    <scope>SUBUNIT</scope>
</reference>
<reference key="4">
    <citation type="journal article" date="2008" name="Virology">
        <title>Equine arteritis virus is delivered to an acidic compartment of host cells via clathrin-dependent endocytosis.</title>
        <authorList>
            <person name="Nitschke M."/>
            <person name="Korte T."/>
            <person name="Tielesch C."/>
            <person name="Ter-Avetisyan G."/>
            <person name="Tunnemann G."/>
            <person name="Cardoso M.C."/>
            <person name="Veit M."/>
            <person name="Herrmann A."/>
        </authorList>
    </citation>
    <scope>FUNCTION OF GP2B-GP3-GP4 HETEROTRIMER</scope>
</reference>
<reference key="5">
    <citation type="journal article" date="2013" name="J. Biol. Chem.">
        <title>Co-translational processing of glycoprotein 3 from equine arteritis virus: N-glycosylation adjacent to the signal peptide prevents cleavage.</title>
        <authorList>
            <person name="Matczuk A.K."/>
            <person name="Kunec D."/>
            <person name="Veit M."/>
        </authorList>
    </citation>
    <scope>SUBCELLULAR LOCATION</scope>
    <scope>GLYCOSYLATION AT ASN-28 AND ASN-29</scope>
    <scope>REGION</scope>
    <scope>MUTAGENESIS OF ASN-28; ASN-29 AND 137-LEU--SER-163</scope>
</reference>
<evidence type="ECO:0000250" key="1"/>
<evidence type="ECO:0000255" key="2"/>
<evidence type="ECO:0000269" key="3">
    <source>
    </source>
</evidence>
<evidence type="ECO:0000269" key="4">
    <source>
    </source>
</evidence>
<evidence type="ECO:0000305" key="5"/>
<sequence>MGRAYSGPVALLCFFLYFCFICGSVGSNNTTICMHTTSDTSVHLFYAANVTFPSHFQRHFAAAQDFVVHTGYEYAGVTMLVHLFANLVLTFPSLVNCSRPVNVFANASCVQVVCSHTNSTTGLGQLSFSFVDEDLRLHIRPTLICWFALLLVHFLPMPRCRGS</sequence>
<dbReference type="EMBL" id="X53459">
    <property type="protein sequence ID" value="CAA37542.1"/>
    <property type="molecule type" value="Genomic_RNA"/>
</dbReference>
<dbReference type="PIR" id="D39925">
    <property type="entry name" value="D39925"/>
</dbReference>
<dbReference type="RefSeq" id="NP_065657.1">
    <property type="nucleotide sequence ID" value="NC_002532.2"/>
</dbReference>
<dbReference type="SMR" id="P28993"/>
<dbReference type="GlyCosmos" id="P28993">
    <property type="glycosylation" value="6 sites, No reported glycans"/>
</dbReference>
<dbReference type="iPTMnet" id="P28993"/>
<dbReference type="GeneID" id="921346"/>
<dbReference type="KEGG" id="vg:921346"/>
<dbReference type="Proteomes" id="UP000000353">
    <property type="component" value="Segment"/>
</dbReference>
<dbReference type="GO" id="GO:0005576">
    <property type="term" value="C:extracellular region"/>
    <property type="evidence" value="ECO:0007669"/>
    <property type="project" value="UniProtKB-SubCell"/>
</dbReference>
<dbReference type="GO" id="GO:0044167">
    <property type="term" value="C:host cell endoplasmic reticulum membrane"/>
    <property type="evidence" value="ECO:0007669"/>
    <property type="project" value="UniProtKB-SubCell"/>
</dbReference>
<dbReference type="GO" id="GO:0044178">
    <property type="term" value="C:host cell Golgi membrane"/>
    <property type="evidence" value="ECO:0007669"/>
    <property type="project" value="UniProtKB-SubCell"/>
</dbReference>
<dbReference type="GO" id="GO:0016020">
    <property type="term" value="C:membrane"/>
    <property type="evidence" value="ECO:0007669"/>
    <property type="project" value="UniProtKB-KW"/>
</dbReference>
<dbReference type="GO" id="GO:0019031">
    <property type="term" value="C:viral envelope"/>
    <property type="evidence" value="ECO:0007669"/>
    <property type="project" value="UniProtKB-KW"/>
</dbReference>
<dbReference type="GO" id="GO:0055036">
    <property type="term" value="C:virion membrane"/>
    <property type="evidence" value="ECO:0007669"/>
    <property type="project" value="UniProtKB-SubCell"/>
</dbReference>
<dbReference type="GO" id="GO:0075512">
    <property type="term" value="P:clathrin-dependent endocytosis of virus by host cell"/>
    <property type="evidence" value="ECO:0007669"/>
    <property type="project" value="UniProtKB-KW"/>
</dbReference>
<dbReference type="GO" id="GO:0019062">
    <property type="term" value="P:virion attachment to host cell"/>
    <property type="evidence" value="ECO:0007669"/>
    <property type="project" value="UniProtKB-KW"/>
</dbReference>
<dbReference type="InterPro" id="IPR004310">
    <property type="entry name" value="EAV_Gp3"/>
</dbReference>
<dbReference type="Pfam" id="PF03076">
    <property type="entry name" value="GP3"/>
    <property type="match status" value="1"/>
</dbReference>
<organismHost>
    <name type="scientific">Equidae</name>
    <name type="common">horses</name>
    <dbReference type="NCBI Taxonomy" id="9788"/>
</organismHost>